<organism evidence="11">
    <name type="scientific">Drosophila melanogaster</name>
    <name type="common">Fruit fly</name>
    <dbReference type="NCBI Taxonomy" id="7227"/>
    <lineage>
        <taxon>Eukaryota</taxon>
        <taxon>Metazoa</taxon>
        <taxon>Ecdysozoa</taxon>
        <taxon>Arthropoda</taxon>
        <taxon>Hexapoda</taxon>
        <taxon>Insecta</taxon>
        <taxon>Pterygota</taxon>
        <taxon>Neoptera</taxon>
        <taxon>Endopterygota</taxon>
        <taxon>Diptera</taxon>
        <taxon>Brachycera</taxon>
        <taxon>Muscomorpha</taxon>
        <taxon>Ephydroidea</taxon>
        <taxon>Drosophilidae</taxon>
        <taxon>Drosophila</taxon>
        <taxon>Sophophora</taxon>
    </lineage>
</organism>
<comment type="function">
    <text evidence="4 5 6 7">Component of the CCR4-NOT complex which is one of the major cellular mRNA deadenylases and is linked to various cellular processes including bulk mRNA degradation, miRNA-mediated repression, translational repression during translational initiation and general transcription regulation (PubMed:20504953, PubMed:23303381). Additional complex functions may be a consequence of its influence on mRNA expression (PubMed:23303381). Essential for viability (PubMed:9475742). Acts as a suppressor of position effect variegation (PEV) at the white locus and regulates the expression of several unrelated genes (PubMed:9475742). Plays a role in germline stem cell differentiation in the ovaries (PubMed:29887366).</text>
</comment>
<comment type="subunit">
    <text evidence="4 5">Component of the CCR4-NOT complex composed of at least Pop2/Caf1-55, Ccr4, Not1, Rga/Not2, and Not3.</text>
</comment>
<comment type="interaction">
    <interactant intactId="EBI-6512918">
        <id>Q94547</id>
    </interactant>
    <interactant intactId="EBI-9942208">
        <id>X2JCC3</id>
        <label>Pop2</label>
    </interactant>
    <organismsDiffer>false</organismsDiffer>
    <experiments>2</experiments>
</comment>
<comment type="interaction">
    <interactant intactId="EBI-6512918">
        <id>Q94547</id>
    </interactant>
    <interactant intactId="EBI-252055">
        <id>P25822</id>
        <label>pum</label>
    </interactant>
    <organismsDiffer>false</organismsDiffer>
    <experiments>3</experiments>
</comment>
<comment type="subcellular location">
    <subcellularLocation>
        <location evidence="5">Cytoplasm</location>
    </subcellularLocation>
</comment>
<comment type="alternative products">
    <event type="alternative splicing"/>
    <isoform>
        <id>Q94547-1</id>
        <name evidence="8">A</name>
        <sequence type="displayed"/>
    </isoform>
    <isoform>
        <id>Q94547-2</id>
        <name evidence="8">B</name>
        <sequence type="described" ref="VSP_010196"/>
    </isoform>
</comment>
<comment type="tissue specificity">
    <text evidence="6">Expressed in heterogeneous levels between adjacent germline stem cells (at protein level).</text>
</comment>
<comment type="developmental stage">
    <text evidence="4">Expressed in embryos and adult (at protein level).</text>
</comment>
<comment type="similarity">
    <text evidence="10">Belongs to the CNOT2/3/5 family.</text>
</comment>
<accession>Q94547</accession>
<accession>Q1LZ18</accession>
<accession>Q8IPQ1</accession>
<accession>Q8T3L5</accession>
<accession>Q9VNE5</accession>
<evidence type="ECO:0000256" key="1">
    <source>
        <dbReference type="SAM" id="MobiDB-lite"/>
    </source>
</evidence>
<evidence type="ECO:0000269" key="2">
    <source>
    </source>
</evidence>
<evidence type="ECO:0000269" key="3">
    <source>
    </source>
</evidence>
<evidence type="ECO:0000269" key="4">
    <source>
    </source>
</evidence>
<evidence type="ECO:0000269" key="5">
    <source>
    </source>
</evidence>
<evidence type="ECO:0000269" key="6">
    <source>
    </source>
</evidence>
<evidence type="ECO:0000269" key="7">
    <source>
    </source>
</evidence>
<evidence type="ECO:0000303" key="8">
    <source>
    </source>
</evidence>
<evidence type="ECO:0000303" key="9">
    <source>
    </source>
</evidence>
<evidence type="ECO:0000305" key="10"/>
<evidence type="ECO:0000312" key="11">
    <source>
        <dbReference type="EMBL" id="AAM11125.1"/>
    </source>
</evidence>
<evidence type="ECO:0000312" key="12">
    <source>
        <dbReference type="FlyBase" id="FBgn0017550"/>
    </source>
</evidence>
<dbReference type="EMBL" id="U75467">
    <property type="protein sequence ID" value="AAB18342.1"/>
    <property type="molecule type" value="Genomic_DNA"/>
</dbReference>
<dbReference type="EMBL" id="AE014297">
    <property type="protein sequence ID" value="AAF51992.2"/>
    <property type="molecule type" value="Genomic_DNA"/>
</dbReference>
<dbReference type="EMBL" id="AE014297">
    <property type="protein sequence ID" value="AAN13250.1"/>
    <property type="molecule type" value="Genomic_DNA"/>
</dbReference>
<dbReference type="EMBL" id="AY094772">
    <property type="protein sequence ID" value="AAM11125.1"/>
    <property type="molecule type" value="mRNA"/>
</dbReference>
<dbReference type="EMBL" id="BT025208">
    <property type="protein sequence ID" value="ABF17899.1"/>
    <property type="molecule type" value="mRNA"/>
</dbReference>
<dbReference type="RefSeq" id="NP_001287183.1">
    <molecule id="Q94547-2"/>
    <property type="nucleotide sequence ID" value="NM_001300254.1"/>
</dbReference>
<dbReference type="RefSeq" id="NP_524239.2">
    <molecule id="Q94547-2"/>
    <property type="nucleotide sequence ID" value="NM_079515.3"/>
</dbReference>
<dbReference type="RefSeq" id="NP_730966.1">
    <molecule id="Q94547-1"/>
    <property type="nucleotide sequence ID" value="NM_169080.3"/>
</dbReference>
<dbReference type="SMR" id="Q94547"/>
<dbReference type="BioGRID" id="65889">
    <property type="interactions" value="22"/>
</dbReference>
<dbReference type="ComplexPortal" id="CPX-2771">
    <property type="entry name" value="CCR4-NOT mRNA deadenylase complex"/>
</dbReference>
<dbReference type="FunCoup" id="Q94547">
    <property type="interactions" value="1988"/>
</dbReference>
<dbReference type="IntAct" id="Q94547">
    <property type="interactions" value="6"/>
</dbReference>
<dbReference type="STRING" id="7227.FBpp0078390"/>
<dbReference type="GlyGen" id="Q94547">
    <property type="glycosylation" value="3 sites, 1 O-linked glycan (1 site)"/>
</dbReference>
<dbReference type="PaxDb" id="7227-FBpp0078390"/>
<dbReference type="DNASU" id="40683"/>
<dbReference type="EnsemblMetazoa" id="FBtr0078741">
    <molecule id="Q94547-1"/>
    <property type="protein sequence ID" value="FBpp0078390"/>
    <property type="gene ID" value="FBgn0017550"/>
</dbReference>
<dbReference type="EnsemblMetazoa" id="FBtr0078742">
    <molecule id="Q94547-2"/>
    <property type="protein sequence ID" value="FBpp0078391"/>
    <property type="gene ID" value="FBgn0017550"/>
</dbReference>
<dbReference type="EnsemblMetazoa" id="FBtr0345140">
    <molecule id="Q94547-2"/>
    <property type="protein sequence ID" value="FBpp0311361"/>
    <property type="gene ID" value="FBgn0017550"/>
</dbReference>
<dbReference type="GeneID" id="40683"/>
<dbReference type="KEGG" id="dme:Dmel_CG2161"/>
<dbReference type="UCSC" id="CG2161-RA">
    <molecule id="Q94547-1"/>
    <property type="organism name" value="d. melanogaster"/>
</dbReference>
<dbReference type="AGR" id="FB:FBgn0017550"/>
<dbReference type="CTD" id="40683"/>
<dbReference type="FlyBase" id="FBgn0017550">
    <property type="gene designation" value="Rga"/>
</dbReference>
<dbReference type="VEuPathDB" id="VectorBase:FBgn0017550"/>
<dbReference type="eggNOG" id="KOG2151">
    <property type="taxonomic scope" value="Eukaryota"/>
</dbReference>
<dbReference type="GeneTree" id="ENSGT00390000001285"/>
<dbReference type="InParanoid" id="Q94547"/>
<dbReference type="OMA" id="RGVYLLW"/>
<dbReference type="OrthoDB" id="25391at2759"/>
<dbReference type="PhylomeDB" id="Q94547"/>
<dbReference type="BioGRID-ORCS" id="40683">
    <property type="hits" value="0 hits in 1 CRISPR screen"/>
</dbReference>
<dbReference type="GenomeRNAi" id="40683"/>
<dbReference type="PRO" id="PR:Q94547"/>
<dbReference type="Proteomes" id="UP000000803">
    <property type="component" value="Chromosome 3R"/>
</dbReference>
<dbReference type="Bgee" id="FBgn0017550">
    <property type="expression patterns" value="Expressed in spermatocyte in testis and 273 other cell types or tissues"/>
</dbReference>
<dbReference type="ExpressionAtlas" id="Q94547">
    <property type="expression patterns" value="baseline and differential"/>
</dbReference>
<dbReference type="GO" id="GO:0030014">
    <property type="term" value="C:CCR4-NOT complex"/>
    <property type="evidence" value="ECO:0000314"/>
    <property type="project" value="FlyBase"/>
</dbReference>
<dbReference type="GO" id="GO:0030015">
    <property type="term" value="C:CCR4-NOT core complex"/>
    <property type="evidence" value="ECO:0000318"/>
    <property type="project" value="GO_Central"/>
</dbReference>
<dbReference type="GO" id="GO:0005829">
    <property type="term" value="C:cytosol"/>
    <property type="evidence" value="ECO:0000314"/>
    <property type="project" value="FlyBase"/>
</dbReference>
<dbReference type="GO" id="GO:0005634">
    <property type="term" value="C:nucleus"/>
    <property type="evidence" value="ECO:0000303"/>
    <property type="project" value="UniProtKB"/>
</dbReference>
<dbReference type="GO" id="GO:0000932">
    <property type="term" value="C:P-body"/>
    <property type="evidence" value="ECO:0000318"/>
    <property type="project" value="GO_Central"/>
</dbReference>
<dbReference type="GO" id="GO:0036099">
    <property type="term" value="P:female germ-line stem cell population maintenance"/>
    <property type="evidence" value="ECO:0000315"/>
    <property type="project" value="UniProtKB"/>
</dbReference>
<dbReference type="GO" id="GO:0006402">
    <property type="term" value="P:mRNA catabolic process"/>
    <property type="evidence" value="ECO:0000314"/>
    <property type="project" value="FlyBase"/>
</dbReference>
<dbReference type="GO" id="GO:0017148">
    <property type="term" value="P:negative regulation of translation"/>
    <property type="evidence" value="ECO:0000314"/>
    <property type="project" value="FlyBase"/>
</dbReference>
<dbReference type="GO" id="GO:0000288">
    <property type="term" value="P:nuclear-transcribed mRNA catabolic process, deadenylation-dependent decay"/>
    <property type="evidence" value="ECO:0000315"/>
    <property type="project" value="FlyBase"/>
</dbReference>
<dbReference type="GO" id="GO:0000289">
    <property type="term" value="P:nuclear-transcribed mRNA poly(A) tail shortening"/>
    <property type="evidence" value="ECO:0000315"/>
    <property type="project" value="FlyBase"/>
</dbReference>
<dbReference type="GO" id="GO:0006355">
    <property type="term" value="P:regulation of DNA-templated transcription"/>
    <property type="evidence" value="ECO:0000315"/>
    <property type="project" value="UniProtKB"/>
</dbReference>
<dbReference type="GO" id="GO:2000036">
    <property type="term" value="P:regulation of stem cell population maintenance"/>
    <property type="evidence" value="ECO:0000316"/>
    <property type="project" value="UniProtKB"/>
</dbReference>
<dbReference type="GO" id="GO:0031047">
    <property type="term" value="P:regulatory ncRNA-mediated gene silencing"/>
    <property type="evidence" value="ECO:0007669"/>
    <property type="project" value="UniProtKB-KW"/>
</dbReference>
<dbReference type="FunFam" id="2.30.30.1020:FF:000005">
    <property type="entry name" value="Regena, isoform C"/>
    <property type="match status" value="1"/>
</dbReference>
<dbReference type="Gene3D" id="2.30.30.1020">
    <property type="entry name" value="CCR4-NOT complex subunit 2/3/5, C-terminal domain"/>
    <property type="match status" value="1"/>
</dbReference>
<dbReference type="InterPro" id="IPR038635">
    <property type="entry name" value="CCR4-NOT_su2/3/5_C_sf"/>
</dbReference>
<dbReference type="InterPro" id="IPR040168">
    <property type="entry name" value="Not2/3/5"/>
</dbReference>
<dbReference type="InterPro" id="IPR007282">
    <property type="entry name" value="NOT2/3/5_C"/>
</dbReference>
<dbReference type="PANTHER" id="PTHR23326">
    <property type="entry name" value="CCR4 NOT-RELATED"/>
    <property type="match status" value="1"/>
</dbReference>
<dbReference type="Pfam" id="PF04153">
    <property type="entry name" value="NOT2_3_5_C"/>
    <property type="match status" value="1"/>
</dbReference>
<gene>
    <name evidence="12" type="primary">Rga</name>
    <name evidence="9 12" type="synonym">Not2</name>
    <name type="ORF">CG2161</name>
</gene>
<sequence length="585" mass="59973">MANLNFQQPPRSIANAALAGRTTGGFGGSSLAGHVTPTSGMFQTDFANSYPGTANYGQAPQQQQQQQQQPQLSPNRNAQLSVGGPAISSGNRNANLFGQRQFVERRAMQGLGSGPMSNMGNFMQTGRGGYGTGGGGGGPLNNFHVFGGGGGSDTSTPALLDPTEFPSLTNARGQNDQTLPQSNPLQPPGSKPYGNFFTSFGMVKQPTSEQSEFTMSNEDFPALPGTQNSDGTTNAVGSVAGTGGSGGASTENHLDGTEKPMNSIVVSGSASGSSGSNVGVVGGNGLGAVGSGIGGLAVGGGGGAGSSGGGGVGGNAASGVVGGSHVGLVGSNSGIGGVNSVPNSNAMMGVGGGLGSGSGSSGSGAGGEHLNDNSSNDKLVKSGVQTSPDGKVTNIPATMVNNQFGMVGLLTFIRAAETDPNLVTLSLGTDLTGLGLNLNSQESLHTTFAGPFVAQPCRAQDVEFNVPPEYLINFAIRDKLTAPVLKKLQEDLLFFLFYTNIGDMMQLMAAAELHSREWRYHVEEKIWITRIPGIDQYEKNGTKERGTFYYFDAQSWKRLSKVFQIDPEKLDKCPNISAFMNGQSV</sequence>
<protein>
    <recommendedName>
        <fullName>Regulator of gene activity</fullName>
        <shortName>Protein regena</shortName>
    </recommendedName>
    <alternativeName>
        <fullName>CCR4-NOT transcription complex subunit 2 homolog</fullName>
        <shortName>CNOT2</shortName>
        <shortName>Not2</shortName>
    </alternativeName>
</protein>
<reference evidence="10" key="1">
    <citation type="journal article" date="1998" name="Genetics">
        <title>Regena (Rga), a Drosophila homolog of the global negative transcriptional regulator CDC36 (NOT2) from yeast, modifies gene expression and suppresses position effect variegation.</title>
        <authorList>
            <person name="Frolov M.V."/>
            <person name="Benevolenskaya E.V."/>
            <person name="Birchler J.A."/>
        </authorList>
    </citation>
    <scope>NUCLEOTIDE SEQUENCE [GENOMIC DNA]</scope>
    <scope>FUNCTION</scope>
    <source>
        <strain evidence="7">Canton-S</strain>
        <tissue evidence="7">Eye-antennal disk</tissue>
    </source>
</reference>
<reference evidence="10" key="2">
    <citation type="journal article" date="2000" name="Science">
        <title>The genome sequence of Drosophila melanogaster.</title>
        <authorList>
            <person name="Adams M.D."/>
            <person name="Celniker S.E."/>
            <person name="Holt R.A."/>
            <person name="Evans C.A."/>
            <person name="Gocayne J.D."/>
            <person name="Amanatides P.G."/>
            <person name="Scherer S.E."/>
            <person name="Li P.W."/>
            <person name="Hoskins R.A."/>
            <person name="Galle R.F."/>
            <person name="George R.A."/>
            <person name="Lewis S.E."/>
            <person name="Richards S."/>
            <person name="Ashburner M."/>
            <person name="Henderson S.N."/>
            <person name="Sutton G.G."/>
            <person name="Wortman J.R."/>
            <person name="Yandell M.D."/>
            <person name="Zhang Q."/>
            <person name="Chen L.X."/>
            <person name="Brandon R.C."/>
            <person name="Rogers Y.-H.C."/>
            <person name="Blazej R.G."/>
            <person name="Champe M."/>
            <person name="Pfeiffer B.D."/>
            <person name="Wan K.H."/>
            <person name="Doyle C."/>
            <person name="Baxter E.G."/>
            <person name="Helt G."/>
            <person name="Nelson C.R."/>
            <person name="Miklos G.L.G."/>
            <person name="Abril J.F."/>
            <person name="Agbayani A."/>
            <person name="An H.-J."/>
            <person name="Andrews-Pfannkoch C."/>
            <person name="Baldwin D."/>
            <person name="Ballew R.M."/>
            <person name="Basu A."/>
            <person name="Baxendale J."/>
            <person name="Bayraktaroglu L."/>
            <person name="Beasley E.M."/>
            <person name="Beeson K.Y."/>
            <person name="Benos P.V."/>
            <person name="Berman B.P."/>
            <person name="Bhandari D."/>
            <person name="Bolshakov S."/>
            <person name="Borkova D."/>
            <person name="Botchan M.R."/>
            <person name="Bouck J."/>
            <person name="Brokstein P."/>
            <person name="Brottier P."/>
            <person name="Burtis K.C."/>
            <person name="Busam D.A."/>
            <person name="Butler H."/>
            <person name="Cadieu E."/>
            <person name="Center A."/>
            <person name="Chandra I."/>
            <person name="Cherry J.M."/>
            <person name="Cawley S."/>
            <person name="Dahlke C."/>
            <person name="Davenport L.B."/>
            <person name="Davies P."/>
            <person name="de Pablos B."/>
            <person name="Delcher A."/>
            <person name="Deng Z."/>
            <person name="Mays A.D."/>
            <person name="Dew I."/>
            <person name="Dietz S.M."/>
            <person name="Dodson K."/>
            <person name="Doup L.E."/>
            <person name="Downes M."/>
            <person name="Dugan-Rocha S."/>
            <person name="Dunkov B.C."/>
            <person name="Dunn P."/>
            <person name="Durbin K.J."/>
            <person name="Evangelista C.C."/>
            <person name="Ferraz C."/>
            <person name="Ferriera S."/>
            <person name="Fleischmann W."/>
            <person name="Fosler C."/>
            <person name="Gabrielian A.E."/>
            <person name="Garg N.S."/>
            <person name="Gelbart W.M."/>
            <person name="Glasser K."/>
            <person name="Glodek A."/>
            <person name="Gong F."/>
            <person name="Gorrell J.H."/>
            <person name="Gu Z."/>
            <person name="Guan P."/>
            <person name="Harris M."/>
            <person name="Harris N.L."/>
            <person name="Harvey D.A."/>
            <person name="Heiman T.J."/>
            <person name="Hernandez J.R."/>
            <person name="Houck J."/>
            <person name="Hostin D."/>
            <person name="Houston K.A."/>
            <person name="Howland T.J."/>
            <person name="Wei M.-H."/>
            <person name="Ibegwam C."/>
            <person name="Jalali M."/>
            <person name="Kalush F."/>
            <person name="Karpen G.H."/>
            <person name="Ke Z."/>
            <person name="Kennison J.A."/>
            <person name="Ketchum K.A."/>
            <person name="Kimmel B.E."/>
            <person name="Kodira C.D."/>
            <person name="Kraft C.L."/>
            <person name="Kravitz S."/>
            <person name="Kulp D."/>
            <person name="Lai Z."/>
            <person name="Lasko P."/>
            <person name="Lei Y."/>
            <person name="Levitsky A.A."/>
            <person name="Li J.H."/>
            <person name="Li Z."/>
            <person name="Liang Y."/>
            <person name="Lin X."/>
            <person name="Liu X."/>
            <person name="Mattei B."/>
            <person name="McIntosh T.C."/>
            <person name="McLeod M.P."/>
            <person name="McPherson D."/>
            <person name="Merkulov G."/>
            <person name="Milshina N.V."/>
            <person name="Mobarry C."/>
            <person name="Morris J."/>
            <person name="Moshrefi A."/>
            <person name="Mount S.M."/>
            <person name="Moy M."/>
            <person name="Murphy B."/>
            <person name="Murphy L."/>
            <person name="Muzny D.M."/>
            <person name="Nelson D.L."/>
            <person name="Nelson D.R."/>
            <person name="Nelson K.A."/>
            <person name="Nixon K."/>
            <person name="Nusskern D.R."/>
            <person name="Pacleb J.M."/>
            <person name="Palazzolo M."/>
            <person name="Pittman G.S."/>
            <person name="Pan S."/>
            <person name="Pollard J."/>
            <person name="Puri V."/>
            <person name="Reese M.G."/>
            <person name="Reinert K."/>
            <person name="Remington K."/>
            <person name="Saunders R.D.C."/>
            <person name="Scheeler F."/>
            <person name="Shen H."/>
            <person name="Shue B.C."/>
            <person name="Siden-Kiamos I."/>
            <person name="Simpson M."/>
            <person name="Skupski M.P."/>
            <person name="Smith T.J."/>
            <person name="Spier E."/>
            <person name="Spradling A.C."/>
            <person name="Stapleton M."/>
            <person name="Strong R."/>
            <person name="Sun E."/>
            <person name="Svirskas R."/>
            <person name="Tector C."/>
            <person name="Turner R."/>
            <person name="Venter E."/>
            <person name="Wang A.H."/>
            <person name="Wang X."/>
            <person name="Wang Z.-Y."/>
            <person name="Wassarman D.A."/>
            <person name="Weinstock G.M."/>
            <person name="Weissenbach J."/>
            <person name="Williams S.M."/>
            <person name="Woodage T."/>
            <person name="Worley K.C."/>
            <person name="Wu D."/>
            <person name="Yang S."/>
            <person name="Yao Q.A."/>
            <person name="Ye J."/>
            <person name="Yeh R.-F."/>
            <person name="Zaveri J.S."/>
            <person name="Zhan M."/>
            <person name="Zhang G."/>
            <person name="Zhao Q."/>
            <person name="Zheng L."/>
            <person name="Zheng X.H."/>
            <person name="Zhong F.N."/>
            <person name="Zhong W."/>
            <person name="Zhou X."/>
            <person name="Zhu S.C."/>
            <person name="Zhu X."/>
            <person name="Smith H.O."/>
            <person name="Gibbs R.A."/>
            <person name="Myers E.W."/>
            <person name="Rubin G.M."/>
            <person name="Venter J.C."/>
        </authorList>
    </citation>
    <scope>NUCLEOTIDE SEQUENCE [LARGE SCALE GENOMIC DNA]</scope>
    <source>
        <strain evidence="2">Berkeley</strain>
    </source>
</reference>
<reference evidence="10" key="3">
    <citation type="journal article" date="2002" name="Genome Biol.">
        <title>Annotation of the Drosophila melanogaster euchromatic genome: a systematic review.</title>
        <authorList>
            <person name="Misra S."/>
            <person name="Crosby M.A."/>
            <person name="Mungall C.J."/>
            <person name="Matthews B.B."/>
            <person name="Campbell K.S."/>
            <person name="Hradecky P."/>
            <person name="Huang Y."/>
            <person name="Kaminker J.S."/>
            <person name="Millburn G.H."/>
            <person name="Prochnik S.E."/>
            <person name="Smith C.D."/>
            <person name="Tupy J.L."/>
            <person name="Whitfield E.J."/>
            <person name="Bayraktaroglu L."/>
            <person name="Berman B.P."/>
            <person name="Bettencourt B.R."/>
            <person name="Celniker S.E."/>
            <person name="de Grey A.D.N.J."/>
            <person name="Drysdale R.A."/>
            <person name="Harris N.L."/>
            <person name="Richter J."/>
            <person name="Russo S."/>
            <person name="Schroeder A.J."/>
            <person name="Shu S.Q."/>
            <person name="Stapleton M."/>
            <person name="Yamada C."/>
            <person name="Ashburner M."/>
            <person name="Gelbart W.M."/>
            <person name="Rubin G.M."/>
            <person name="Lewis S.E."/>
        </authorList>
    </citation>
    <scope>GENOME REANNOTATION</scope>
    <scope>ALTERNATIVE SPLICING</scope>
    <source>
        <strain>Berkeley</strain>
    </source>
</reference>
<reference evidence="10" key="4">
    <citation type="journal article" date="2002" name="Genome Biol.">
        <title>A Drosophila full-length cDNA resource.</title>
        <authorList>
            <person name="Stapleton M."/>
            <person name="Carlson J.W."/>
            <person name="Brokstein P."/>
            <person name="Yu C."/>
            <person name="Champe M."/>
            <person name="George R.A."/>
            <person name="Guarin H."/>
            <person name="Kronmiller B."/>
            <person name="Pacleb J.M."/>
            <person name="Park S."/>
            <person name="Wan K.H."/>
            <person name="Rubin G.M."/>
            <person name="Celniker S.E."/>
        </authorList>
    </citation>
    <scope>NUCLEOTIDE SEQUENCE [LARGE SCALE MRNA] (ISOFORM A)</scope>
    <source>
        <strain evidence="3">Berkeley</strain>
        <tissue evidence="3">Ovary</tissue>
    </source>
</reference>
<reference key="5">
    <citation type="submission" date="2006-10" db="EMBL/GenBank/DDBJ databases">
        <authorList>
            <person name="Stapleton M."/>
            <person name="Carlson J.W."/>
            <person name="Frise E."/>
            <person name="Kapadia B."/>
            <person name="Park S."/>
            <person name="Wan K.H."/>
            <person name="Yu C."/>
            <person name="Celniker S.E."/>
        </authorList>
    </citation>
    <scope>NUCLEOTIDE SEQUENCE [LARGE SCALE MRNA] (ISOFORM A)</scope>
    <source>
        <strain>Berkeley</strain>
    </source>
</reference>
<reference key="6">
    <citation type="journal article" date="2010" name="RNA">
        <title>Subunits of the Drosophila CCR4-NOT complex and their roles in mRNA deadenylation.</title>
        <authorList>
            <person name="Temme C."/>
            <person name="Zhang L."/>
            <person name="Kremmer E."/>
            <person name="Ihling C."/>
            <person name="Chartier A."/>
            <person name="Sinz A."/>
            <person name="Simonelig M."/>
            <person name="Wahle E."/>
        </authorList>
    </citation>
    <scope>FUNCTION</scope>
    <scope>IDENTIFICATION IN THE CCR4-NOT COMPLEX</scope>
</reference>
<reference key="7">
    <citation type="journal article" date="2013" name="RNA Biol.">
        <title>NOT10 and C2orf29/NOT11 form a conserved module of the CCR4-NOT complex that docks onto the NOT1 N-terminal domain.</title>
        <authorList>
            <person name="Bawankar P."/>
            <person name="Loh B."/>
            <person name="Wohlbold L."/>
            <person name="Schmidt S."/>
            <person name="Izaurralde E."/>
        </authorList>
    </citation>
    <scope>FUNCTION</scope>
    <scope>IDENTIFICATION IN THE CCR4-NOT COMPLEX</scope>
    <scope>SUBCELLULAR LOCATION</scope>
    <scope>DEVELOPMENTAL STAGE</scope>
</reference>
<reference key="8">
    <citation type="journal article" date="2018" name="Stem Cell Reports">
        <title>Germline Stem Cell Heterogeneity Supports Homeostasis in Drosophila.</title>
        <authorList>
            <person name="Ng A.Y.E."/>
            <person name="Peralta K.R.G."/>
            <person name="Pek J.W."/>
        </authorList>
    </citation>
    <scope>FUNCTION</scope>
    <scope>TISSUE SPECIFICITY</scope>
</reference>
<proteinExistence type="evidence at protein level"/>
<keyword id="KW-0025">Alternative splicing</keyword>
<keyword id="KW-0963">Cytoplasm</keyword>
<keyword id="KW-1185">Reference proteome</keyword>
<keyword id="KW-0943">RNA-mediated gene silencing</keyword>
<keyword id="KW-0804">Transcription</keyword>
<keyword id="KW-0805">Transcription regulation</keyword>
<keyword id="KW-0810">Translation regulation</keyword>
<name>RGA_DROME</name>
<feature type="chain" id="PRO_0000198335" description="Regulator of gene activity">
    <location>
        <begin position="1"/>
        <end position="585"/>
    </location>
</feature>
<feature type="region of interest" description="Disordered" evidence="1">
    <location>
        <begin position="42"/>
        <end position="93"/>
    </location>
</feature>
<feature type="region of interest" description="Disordered" evidence="1">
    <location>
        <begin position="148"/>
        <end position="191"/>
    </location>
</feature>
<feature type="region of interest" description="Disordered" evidence="1">
    <location>
        <begin position="349"/>
        <end position="394"/>
    </location>
</feature>
<feature type="compositionally biased region" description="Polar residues" evidence="1">
    <location>
        <begin position="42"/>
        <end position="56"/>
    </location>
</feature>
<feature type="compositionally biased region" description="Low complexity" evidence="1">
    <location>
        <begin position="58"/>
        <end position="71"/>
    </location>
</feature>
<feature type="compositionally biased region" description="Polar residues" evidence="1">
    <location>
        <begin position="166"/>
        <end position="184"/>
    </location>
</feature>
<feature type="compositionally biased region" description="Gly residues" evidence="1">
    <location>
        <begin position="349"/>
        <end position="367"/>
    </location>
</feature>
<feature type="compositionally biased region" description="Polar residues" evidence="1">
    <location>
        <begin position="372"/>
        <end position="388"/>
    </location>
</feature>
<feature type="splice variant" id="VSP_010196" description="In isoform B." evidence="8">
    <original>GNFFTSF</original>
    <variation>V</variation>
    <location>
        <begin position="194"/>
        <end position="200"/>
    </location>
</feature>
<feature type="sequence conflict" description="In Ref. 1; AAB18342." evidence="10" ref="1">
    <original>A</original>
    <variation>R</variation>
    <location>
        <position position="19"/>
    </location>
</feature>